<gene>
    <name evidence="1" type="primary">atpG</name>
    <name type="ordered locus">Hac_0581</name>
</gene>
<name>ATPG_HELAH</name>
<organism>
    <name type="scientific">Helicobacter acinonychis (strain Sheeba)</name>
    <dbReference type="NCBI Taxonomy" id="382638"/>
    <lineage>
        <taxon>Bacteria</taxon>
        <taxon>Pseudomonadati</taxon>
        <taxon>Campylobacterota</taxon>
        <taxon>Epsilonproteobacteria</taxon>
        <taxon>Campylobacterales</taxon>
        <taxon>Helicobacteraceae</taxon>
        <taxon>Helicobacter</taxon>
    </lineage>
</organism>
<comment type="function">
    <text evidence="1">Produces ATP from ADP in the presence of a proton gradient across the membrane. The gamma chain is believed to be important in regulating ATPase activity and the flow of protons through the CF(0) complex.</text>
</comment>
<comment type="subunit">
    <text evidence="1">F-type ATPases have 2 components, CF(1) - the catalytic core - and CF(0) - the membrane proton channel. CF(1) has five subunits: alpha(3), beta(3), gamma(1), delta(1), epsilon(1). CF(0) has three main subunits: a, b and c.</text>
</comment>
<comment type="subcellular location">
    <subcellularLocation>
        <location evidence="1">Cell inner membrane</location>
        <topology evidence="1">Peripheral membrane protein</topology>
    </subcellularLocation>
</comment>
<comment type="similarity">
    <text evidence="1">Belongs to the ATPase gamma chain family.</text>
</comment>
<dbReference type="EMBL" id="AM260522">
    <property type="protein sequence ID" value="CAJ99397.1"/>
    <property type="molecule type" value="Genomic_DNA"/>
</dbReference>
<dbReference type="RefSeq" id="WP_011577511.1">
    <property type="nucleotide sequence ID" value="NC_008229.1"/>
</dbReference>
<dbReference type="SMR" id="Q17Y79"/>
<dbReference type="STRING" id="382638.Hac_0581"/>
<dbReference type="GeneID" id="31758058"/>
<dbReference type="KEGG" id="hac:Hac_0581"/>
<dbReference type="eggNOG" id="COG0224">
    <property type="taxonomic scope" value="Bacteria"/>
</dbReference>
<dbReference type="HOGENOM" id="CLU_050669_0_1_7"/>
<dbReference type="OrthoDB" id="9812769at2"/>
<dbReference type="BioCyc" id="HACI382638:HAC_RS02570-MONOMER"/>
<dbReference type="Proteomes" id="UP000000775">
    <property type="component" value="Chromosome"/>
</dbReference>
<dbReference type="GO" id="GO:0005886">
    <property type="term" value="C:plasma membrane"/>
    <property type="evidence" value="ECO:0007669"/>
    <property type="project" value="UniProtKB-SubCell"/>
</dbReference>
<dbReference type="GO" id="GO:0045259">
    <property type="term" value="C:proton-transporting ATP synthase complex"/>
    <property type="evidence" value="ECO:0007669"/>
    <property type="project" value="UniProtKB-KW"/>
</dbReference>
<dbReference type="GO" id="GO:0005524">
    <property type="term" value="F:ATP binding"/>
    <property type="evidence" value="ECO:0007669"/>
    <property type="project" value="UniProtKB-UniRule"/>
</dbReference>
<dbReference type="GO" id="GO:0046933">
    <property type="term" value="F:proton-transporting ATP synthase activity, rotational mechanism"/>
    <property type="evidence" value="ECO:0007669"/>
    <property type="project" value="UniProtKB-UniRule"/>
</dbReference>
<dbReference type="GO" id="GO:0042777">
    <property type="term" value="P:proton motive force-driven plasma membrane ATP synthesis"/>
    <property type="evidence" value="ECO:0007669"/>
    <property type="project" value="UniProtKB-UniRule"/>
</dbReference>
<dbReference type="CDD" id="cd12151">
    <property type="entry name" value="F1-ATPase_gamma"/>
    <property type="match status" value="1"/>
</dbReference>
<dbReference type="FunFam" id="1.10.287.80:FF:000007">
    <property type="entry name" value="ATP synthase gamma chain"/>
    <property type="match status" value="1"/>
</dbReference>
<dbReference type="FunFam" id="3.40.1380.10:FF:000006">
    <property type="entry name" value="ATP synthase gamma chain"/>
    <property type="match status" value="1"/>
</dbReference>
<dbReference type="Gene3D" id="3.40.1380.10">
    <property type="match status" value="1"/>
</dbReference>
<dbReference type="Gene3D" id="1.10.287.80">
    <property type="entry name" value="ATP synthase, gamma subunit, helix hairpin domain"/>
    <property type="match status" value="2"/>
</dbReference>
<dbReference type="HAMAP" id="MF_00815">
    <property type="entry name" value="ATP_synth_gamma_bact"/>
    <property type="match status" value="1"/>
</dbReference>
<dbReference type="InterPro" id="IPR035968">
    <property type="entry name" value="ATP_synth_F1_ATPase_gsu"/>
</dbReference>
<dbReference type="InterPro" id="IPR000131">
    <property type="entry name" value="ATP_synth_F1_gsu"/>
</dbReference>
<dbReference type="NCBIfam" id="TIGR01146">
    <property type="entry name" value="ATPsyn_F1gamma"/>
    <property type="match status" value="1"/>
</dbReference>
<dbReference type="PANTHER" id="PTHR11693">
    <property type="entry name" value="ATP SYNTHASE GAMMA CHAIN"/>
    <property type="match status" value="1"/>
</dbReference>
<dbReference type="PANTHER" id="PTHR11693:SF22">
    <property type="entry name" value="ATP SYNTHASE SUBUNIT GAMMA, MITOCHONDRIAL"/>
    <property type="match status" value="1"/>
</dbReference>
<dbReference type="Pfam" id="PF00231">
    <property type="entry name" value="ATP-synt"/>
    <property type="match status" value="1"/>
</dbReference>
<dbReference type="PRINTS" id="PR00126">
    <property type="entry name" value="ATPASEGAMMA"/>
</dbReference>
<dbReference type="SUPFAM" id="SSF52943">
    <property type="entry name" value="ATP synthase (F1-ATPase), gamma subunit"/>
    <property type="match status" value="1"/>
</dbReference>
<proteinExistence type="inferred from homology"/>
<keyword id="KW-0066">ATP synthesis</keyword>
<keyword id="KW-0997">Cell inner membrane</keyword>
<keyword id="KW-1003">Cell membrane</keyword>
<keyword id="KW-0139">CF(1)</keyword>
<keyword id="KW-0375">Hydrogen ion transport</keyword>
<keyword id="KW-0406">Ion transport</keyword>
<keyword id="KW-0472">Membrane</keyword>
<keyword id="KW-0813">Transport</keyword>
<evidence type="ECO:0000255" key="1">
    <source>
        <dbReference type="HAMAP-Rule" id="MF_00815"/>
    </source>
</evidence>
<protein>
    <recommendedName>
        <fullName evidence="1">ATP synthase gamma chain</fullName>
    </recommendedName>
    <alternativeName>
        <fullName evidence="1">ATP synthase F1 sector gamma subunit</fullName>
    </alternativeName>
    <alternativeName>
        <fullName evidence="1">F-ATPase gamma subunit</fullName>
    </alternativeName>
</protein>
<feature type="chain" id="PRO_1000053226" description="ATP synthase gamma chain">
    <location>
        <begin position="1"/>
        <end position="301"/>
    </location>
</feature>
<accession>Q17Y79</accession>
<sequence>MANLRDIRKKIGSVKNTQKITHAMKLVSTSKLRKAEEVARNSRAYALKLDAVFDDVLSKMKNQGIKDIQSKYFRELERLEIKKVDIIFITADKGLCGGFNANTIKKVLACTNEYQEKDIKVRLRGIGKKGNEYFSFNGIEVLDKINDLSSMPNYERAQEFMQKVVEDYLNGKTDKVVIIHNGFKNMIIQEIRVKTILPIGHHIIHQNSQPSEAQETITSEPSGSEDEILDSLAKKYVEYSLYYALIDSLAAEHSARMQAMDTATNNAKDLVKNLTISYNKARQEAITTELVEINAGVEALK</sequence>
<reference key="1">
    <citation type="journal article" date="2006" name="PLoS Genet.">
        <title>Who ate whom? Adaptive Helicobacter genomic changes that accompanied a host jump from early humans to large felines.</title>
        <authorList>
            <person name="Eppinger M."/>
            <person name="Baar C."/>
            <person name="Linz B."/>
            <person name="Raddatz G."/>
            <person name="Lanz C."/>
            <person name="Keller H."/>
            <person name="Morelli G."/>
            <person name="Gressmann H."/>
            <person name="Achtman M."/>
            <person name="Schuster S.C."/>
        </authorList>
    </citation>
    <scope>NUCLEOTIDE SEQUENCE [LARGE SCALE GENOMIC DNA]</scope>
    <source>
        <strain>Sheeba</strain>
    </source>
</reference>